<feature type="chain" id="PRO_0000228049" description="Mitochondrial import inner membrane translocase subunit Tim10 B">
    <location>
        <begin position="1"/>
        <end position="118"/>
    </location>
</feature>
<feature type="region of interest" description="Disordered" evidence="3">
    <location>
        <begin position="89"/>
        <end position="118"/>
    </location>
</feature>
<feature type="short sequence motif" description="Twin CX3C motif">
    <location>
        <begin position="31"/>
        <end position="55"/>
    </location>
</feature>
<feature type="compositionally biased region" description="Polar residues" evidence="3">
    <location>
        <begin position="98"/>
        <end position="109"/>
    </location>
</feature>
<feature type="disulfide bond" evidence="1">
    <location>
        <begin position="31"/>
        <end position="55"/>
    </location>
</feature>
<feature type="disulfide bond" evidence="1">
    <location>
        <begin position="35"/>
        <end position="51"/>
    </location>
</feature>
<sequence>MEQQQQQQQQQQQLRNLRDFLLVYNRMTELCFQRCVPSLHHRALDAEEEACLHSCAGKLIHSNHRLMAAYVQLMPALVQRRMADYEAASAVPHATAEQLETSPSRSLPSGNLGKGGAG</sequence>
<organism>
    <name type="scientific">Bos taurus</name>
    <name type="common">Bovine</name>
    <dbReference type="NCBI Taxonomy" id="9913"/>
    <lineage>
        <taxon>Eukaryota</taxon>
        <taxon>Metazoa</taxon>
        <taxon>Chordata</taxon>
        <taxon>Craniata</taxon>
        <taxon>Vertebrata</taxon>
        <taxon>Euteleostomi</taxon>
        <taxon>Mammalia</taxon>
        <taxon>Eutheria</taxon>
        <taxon>Laurasiatheria</taxon>
        <taxon>Artiodactyla</taxon>
        <taxon>Ruminantia</taxon>
        <taxon>Pecora</taxon>
        <taxon>Bovidae</taxon>
        <taxon>Bovinae</taxon>
        <taxon>Bos</taxon>
    </lineage>
</organism>
<proteinExistence type="inferred from homology"/>
<dbReference type="EMBL" id="BC102678">
    <property type="protein sequence ID" value="AAI02679.1"/>
    <property type="molecule type" value="mRNA"/>
</dbReference>
<dbReference type="RefSeq" id="NP_001035620.1">
    <property type="nucleotide sequence ID" value="NM_001040530.1"/>
</dbReference>
<dbReference type="SMR" id="Q3SZW4"/>
<dbReference type="FunCoup" id="Q3SZW4">
    <property type="interactions" value="1970"/>
</dbReference>
<dbReference type="STRING" id="9913.ENSBTAP00000004639"/>
<dbReference type="PaxDb" id="9913-ENSBTAP00000004639"/>
<dbReference type="GeneID" id="514937"/>
<dbReference type="KEGG" id="bta:514937"/>
<dbReference type="CTD" id="26515"/>
<dbReference type="eggNOG" id="KOG3479">
    <property type="taxonomic scope" value="Eukaryota"/>
</dbReference>
<dbReference type="InParanoid" id="Q3SZW4"/>
<dbReference type="OrthoDB" id="1551503at2759"/>
<dbReference type="Proteomes" id="UP000009136">
    <property type="component" value="Unplaced"/>
</dbReference>
<dbReference type="GO" id="GO:0042719">
    <property type="term" value="C:mitochondrial intermembrane space protein transporter complex"/>
    <property type="evidence" value="ECO:0000318"/>
    <property type="project" value="GO_Central"/>
</dbReference>
<dbReference type="GO" id="GO:0042721">
    <property type="term" value="C:TIM22 mitochondrial import inner membrane insertion complex"/>
    <property type="evidence" value="ECO:0000250"/>
    <property type="project" value="UniProtKB"/>
</dbReference>
<dbReference type="GO" id="GO:0046872">
    <property type="term" value="F:metal ion binding"/>
    <property type="evidence" value="ECO:0007669"/>
    <property type="project" value="UniProtKB-KW"/>
</dbReference>
<dbReference type="GO" id="GO:0015031">
    <property type="term" value="P:protein transport"/>
    <property type="evidence" value="ECO:0007669"/>
    <property type="project" value="UniProtKB-KW"/>
</dbReference>
<dbReference type="FunFam" id="1.10.287.810:FF:000006">
    <property type="entry name" value="mitochondrial import inner membrane translocase subunit Tim10 B"/>
    <property type="match status" value="1"/>
</dbReference>
<dbReference type="Gene3D" id="1.10.287.810">
    <property type="entry name" value="Mitochondrial import inner membrane translocase subunit tim13 like domains"/>
    <property type="match status" value="1"/>
</dbReference>
<dbReference type="InterPro" id="IPR050673">
    <property type="entry name" value="Mito_inner_translocase_sub"/>
</dbReference>
<dbReference type="InterPro" id="IPR004217">
    <property type="entry name" value="Tim10-like"/>
</dbReference>
<dbReference type="InterPro" id="IPR035427">
    <property type="entry name" value="Tim10-like_dom_sf"/>
</dbReference>
<dbReference type="PANTHER" id="PTHR13172">
    <property type="entry name" value="MITOCHONDRIAL IMPORT INNER MEMBRANE TRANSLOCASE SUBUNIT TIM9B"/>
    <property type="match status" value="1"/>
</dbReference>
<dbReference type="Pfam" id="PF02953">
    <property type="entry name" value="zf-Tim10_DDP"/>
    <property type="match status" value="1"/>
</dbReference>
<dbReference type="SUPFAM" id="SSF144122">
    <property type="entry name" value="Tim10-like"/>
    <property type="match status" value="1"/>
</dbReference>
<protein>
    <recommendedName>
        <fullName>Mitochondrial import inner membrane translocase subunit Tim10 B</fullName>
    </recommendedName>
    <alternativeName>
        <fullName>Mitochondrial import inner membrane translocase subunit Tim9 B</fullName>
    </alternativeName>
    <alternativeName>
        <fullName>TIMM10B</fullName>
        <shortName>Tim10b</shortName>
    </alternativeName>
</protein>
<name>T10B_BOVIN</name>
<accession>Q3SZW4</accession>
<evidence type="ECO:0000250" key="1">
    <source>
        <dbReference type="UniProtKB" id="P87108"/>
    </source>
</evidence>
<evidence type="ECO:0000250" key="2">
    <source>
        <dbReference type="UniProtKB" id="Q9Y5J6"/>
    </source>
</evidence>
<evidence type="ECO:0000256" key="3">
    <source>
        <dbReference type="SAM" id="MobiDB-lite"/>
    </source>
</evidence>
<evidence type="ECO:0000305" key="4"/>
<keyword id="KW-1015">Disulfide bond</keyword>
<keyword id="KW-0472">Membrane</keyword>
<keyword id="KW-0479">Metal-binding</keyword>
<keyword id="KW-0496">Mitochondrion</keyword>
<keyword id="KW-0999">Mitochondrion inner membrane</keyword>
<keyword id="KW-0653">Protein transport</keyword>
<keyword id="KW-1185">Reference proteome</keyword>
<keyword id="KW-0811">Translocation</keyword>
<keyword id="KW-0813">Transport</keyword>
<keyword id="KW-0862">Zinc</keyword>
<gene>
    <name type="primary">TIMM10B</name>
    <name type="synonym">FXC1</name>
    <name type="synonym">TIM9B</name>
    <name type="synonym">TIMM9B</name>
</gene>
<comment type="function">
    <text evidence="2">Component of the TIM22 complex, a complex that mediates the import and insertion of multi-pass transmembrane proteins into the mitochondrial inner membrane. The TIM22 complex forms a twin-pore translocase that uses the membrane potential as the external driving force. In the TIM22 complex, it may act as a docking point for the soluble 70 kDa complex that guides the target proteins in transit through the aqueous mitochondrial intermembrane space.</text>
</comment>
<comment type="subunit">
    <text evidence="2">Component of the TIM22 complex, which core is composed of TIMM22, associated with TIMM10 (TIMM10A and/or TIMM10B), TIMM9, AGK and TIMM29.</text>
</comment>
<comment type="subcellular location">
    <subcellularLocation>
        <location evidence="2">Mitochondrion inner membrane</location>
        <topology evidence="2">Peripheral membrane protein</topology>
    </subcellularLocation>
</comment>
<comment type="domain">
    <text evidence="1">The twin CX3C motif contains 4 conserved Cys residues that form 2 disulfide bonds in the mitochondrial intermembrane space. However, during the transit of TIMM10B from cytoplasm into mitochondrion, the Cys residues probably coordinate zinc, thereby preventing folding and allowing its transfer across mitochondrial outer membrane.</text>
</comment>
<comment type="similarity">
    <text evidence="4">Belongs to the small Tim family.</text>
</comment>
<reference key="1">
    <citation type="submission" date="2005-08" db="EMBL/GenBank/DDBJ databases">
        <authorList>
            <consortium name="NIH - Mammalian Gene Collection (MGC) project"/>
        </authorList>
    </citation>
    <scope>NUCLEOTIDE SEQUENCE [LARGE SCALE MRNA]</scope>
    <source>
        <strain>Hereford</strain>
        <tissue>Testis</tissue>
    </source>
</reference>